<keyword id="KW-0007">Acetylation</keyword>
<keyword id="KW-0010">Activator</keyword>
<keyword id="KW-0963">Cytoplasm</keyword>
<keyword id="KW-1017">Isopeptide bond</keyword>
<keyword id="KW-0488">Methylation</keyword>
<keyword id="KW-0539">Nucleus</keyword>
<keyword id="KW-0597">Phosphoprotein</keyword>
<keyword id="KW-1185">Reference proteome</keyword>
<keyword id="KW-0943">RNA-mediated gene silencing</keyword>
<keyword id="KW-0804">Transcription</keyword>
<keyword id="KW-0805">Transcription regulation</keyword>
<keyword id="KW-0832">Ubl conjugation</keyword>
<organism>
    <name type="scientific">Bos taurus</name>
    <name type="common">Bovine</name>
    <dbReference type="NCBI Taxonomy" id="9913"/>
    <lineage>
        <taxon>Eukaryota</taxon>
        <taxon>Metazoa</taxon>
        <taxon>Chordata</taxon>
        <taxon>Craniata</taxon>
        <taxon>Vertebrata</taxon>
        <taxon>Euteleostomi</taxon>
        <taxon>Mammalia</taxon>
        <taxon>Eutheria</taxon>
        <taxon>Laurasiatheria</taxon>
        <taxon>Artiodactyla</taxon>
        <taxon>Ruminantia</taxon>
        <taxon>Pecora</taxon>
        <taxon>Bovidae</taxon>
        <taxon>Bovinae</taxon>
        <taxon>Bos</taxon>
    </lineage>
</organism>
<proteinExistence type="evidence at transcript level"/>
<evidence type="ECO:0000250" key="1"/>
<evidence type="ECO:0000250" key="2">
    <source>
        <dbReference type="UniProtKB" id="Q99MR6"/>
    </source>
</evidence>
<evidence type="ECO:0000250" key="3">
    <source>
        <dbReference type="UniProtKB" id="Q9BXP5"/>
    </source>
</evidence>
<evidence type="ECO:0000256" key="4">
    <source>
        <dbReference type="SAM" id="MobiDB-lite"/>
    </source>
</evidence>
<evidence type="ECO:0000305" key="5"/>
<comment type="function">
    <text evidence="1">Acts as a mediator between the cap-binding complex (CBC) and the primary microRNAs (miRNAs) processing machinery during cell proliferation. Contributes to the stability and delivery of capped primary miRNA transcripts to the primary miRNA processing complex containing DGCR8 and DROSHA, thereby playing a role in RNA-mediated gene silencing (RNAi) by miRNAs. Binds capped RNAs (m7GpppG-capped RNA); however interaction is probably mediated via its interaction with NCBP1/CBP80 component of the CBC complex. Involved in cell cycle progression at S phase. Does not directly confer arsenite resistance but rather modulates arsenic sensitivity. Independently of its activity on miRNAs, necessary and sufficient to promote neural stem cell self-renewal. Does so by directly binding SOX2 promoter and positively regulating its transcription (By similarity).</text>
</comment>
<comment type="subunit">
    <text evidence="2 3">Interacts with CASP8AP2, ERBB4, NCBP1/CBP80 and DROSHA. Interacts with LUZP4. Interacts with NCBP2/CBP20 and NCBP3. Interacts with MTREX (By similarity).</text>
</comment>
<comment type="subcellular location">
    <subcellularLocation>
        <location evidence="1">Nucleus</location>
        <location evidence="1">Nucleoplasm</location>
    </subcellularLocation>
    <subcellularLocation>
        <location evidence="1">Cytoplasm</location>
    </subcellularLocation>
    <text evidence="1">Predominantly nuclear. Shuttles between the nucleus and the cytoplasm in a CRM1-dependent way (By similarity).</text>
</comment>
<comment type="similarity">
    <text evidence="5">Belongs to the ARS2 family.</text>
</comment>
<dbReference type="EMBL" id="BC134491">
    <property type="protein sequence ID" value="AAI34492.1"/>
    <property type="molecule type" value="mRNA"/>
</dbReference>
<dbReference type="RefSeq" id="NP_001077177.1">
    <property type="nucleotide sequence ID" value="NM_001083708.1"/>
</dbReference>
<dbReference type="SMR" id="A4IFB1"/>
<dbReference type="FunCoup" id="A4IFB1">
    <property type="interactions" value="5353"/>
</dbReference>
<dbReference type="STRING" id="9913.ENSBTAP00000001510"/>
<dbReference type="PaxDb" id="9913-ENSBTAP00000001507"/>
<dbReference type="GeneID" id="527938"/>
<dbReference type="KEGG" id="bta:527938"/>
<dbReference type="CTD" id="51593"/>
<dbReference type="VEuPathDB" id="HostDB:ENSBTAG00000001134"/>
<dbReference type="eggNOG" id="KOG2295">
    <property type="taxonomic scope" value="Eukaryota"/>
</dbReference>
<dbReference type="InParanoid" id="A4IFB1"/>
<dbReference type="OMA" id="FEDKIMQ"/>
<dbReference type="OrthoDB" id="342064at2759"/>
<dbReference type="Reactome" id="R-BTA-6807505">
    <property type="pathway name" value="RNA polymerase II transcribes snRNA genes"/>
</dbReference>
<dbReference type="Reactome" id="R-BTA-72163">
    <property type="pathway name" value="mRNA Splicing - Major Pathway"/>
</dbReference>
<dbReference type="Proteomes" id="UP000009136">
    <property type="component" value="Chromosome 25"/>
</dbReference>
<dbReference type="Bgee" id="ENSBTAG00000001134">
    <property type="expression patterns" value="Expressed in thymus and 106 other cell types or tissues"/>
</dbReference>
<dbReference type="GO" id="GO:0005737">
    <property type="term" value="C:cytoplasm"/>
    <property type="evidence" value="ECO:0000250"/>
    <property type="project" value="UniProtKB"/>
</dbReference>
<dbReference type="GO" id="GO:0016604">
    <property type="term" value="C:nuclear body"/>
    <property type="evidence" value="ECO:0000318"/>
    <property type="project" value="GO_Central"/>
</dbReference>
<dbReference type="GO" id="GO:0005654">
    <property type="term" value="C:nucleoplasm"/>
    <property type="evidence" value="ECO:0000250"/>
    <property type="project" value="UniProtKB"/>
</dbReference>
<dbReference type="GO" id="GO:0003677">
    <property type="term" value="F:DNA binding"/>
    <property type="evidence" value="ECO:0000250"/>
    <property type="project" value="UniProtKB"/>
</dbReference>
<dbReference type="GO" id="GO:0097150">
    <property type="term" value="P:neuronal stem cell population maintenance"/>
    <property type="evidence" value="ECO:0000250"/>
    <property type="project" value="UniProtKB"/>
</dbReference>
<dbReference type="GO" id="GO:0031053">
    <property type="term" value="P:primary miRNA processing"/>
    <property type="evidence" value="ECO:0000250"/>
    <property type="project" value="UniProtKB"/>
</dbReference>
<dbReference type="GO" id="GO:0006355">
    <property type="term" value="P:regulation of DNA-templated transcription"/>
    <property type="evidence" value="ECO:0000250"/>
    <property type="project" value="UniProtKB"/>
</dbReference>
<dbReference type="FunFam" id="3.30.70.330:FF:000593">
    <property type="entry name" value="Serrate RNA effector molecule homolog"/>
    <property type="match status" value="1"/>
</dbReference>
<dbReference type="Gene3D" id="3.30.70.330">
    <property type="match status" value="1"/>
</dbReference>
<dbReference type="InterPro" id="IPR012677">
    <property type="entry name" value="Nucleotide-bd_a/b_plait_sf"/>
</dbReference>
<dbReference type="InterPro" id="IPR035979">
    <property type="entry name" value="RBD_domain_sf"/>
</dbReference>
<dbReference type="InterPro" id="IPR039727">
    <property type="entry name" value="SE/Ars2"/>
</dbReference>
<dbReference type="InterPro" id="IPR007042">
    <property type="entry name" value="SERRATE/Ars2_C"/>
</dbReference>
<dbReference type="InterPro" id="IPR021933">
    <property type="entry name" value="SERRATE/Ars2_N"/>
</dbReference>
<dbReference type="PANTHER" id="PTHR13165">
    <property type="entry name" value="ARSENITE-RESISTANCE PROTEIN 2"/>
    <property type="match status" value="1"/>
</dbReference>
<dbReference type="PANTHER" id="PTHR13165:SF0">
    <property type="entry name" value="SERRATE RNA EFFECTOR MOLECULE HOMOLOG"/>
    <property type="match status" value="1"/>
</dbReference>
<dbReference type="Pfam" id="PF04959">
    <property type="entry name" value="ARS2"/>
    <property type="match status" value="1"/>
</dbReference>
<dbReference type="Pfam" id="PF12066">
    <property type="entry name" value="SERRATE_Ars2_N"/>
    <property type="match status" value="1"/>
</dbReference>
<dbReference type="SUPFAM" id="SSF54928">
    <property type="entry name" value="RNA-binding domain, RBD"/>
    <property type="match status" value="1"/>
</dbReference>
<feature type="initiator methionine" description="Removed" evidence="3">
    <location>
        <position position="1"/>
    </location>
</feature>
<feature type="chain" id="PRO_0000325959" description="Serrate RNA effector molecule homolog">
    <location>
        <begin position="2"/>
        <end position="876"/>
    </location>
</feature>
<feature type="region of interest" description="Disordered" evidence="4">
    <location>
        <begin position="1"/>
        <end position="90"/>
    </location>
</feature>
<feature type="region of interest" description="Disordered" evidence="4">
    <location>
        <begin position="272"/>
        <end position="413"/>
    </location>
</feature>
<feature type="region of interest" description="Disordered" evidence="4">
    <location>
        <begin position="575"/>
        <end position="597"/>
    </location>
</feature>
<feature type="region of interest" description="Disordered" evidence="4">
    <location>
        <begin position="835"/>
        <end position="854"/>
    </location>
</feature>
<feature type="compositionally biased region" description="Basic and acidic residues" evidence="4">
    <location>
        <begin position="8"/>
        <end position="73"/>
    </location>
</feature>
<feature type="compositionally biased region" description="Basic and acidic residues" evidence="4">
    <location>
        <begin position="297"/>
        <end position="347"/>
    </location>
</feature>
<feature type="compositionally biased region" description="Acidic residues" evidence="4">
    <location>
        <begin position="370"/>
        <end position="387"/>
    </location>
</feature>
<feature type="compositionally biased region" description="Basic and acidic residues" evidence="4">
    <location>
        <begin position="388"/>
        <end position="413"/>
    </location>
</feature>
<feature type="modified residue" description="N-acetylglycine" evidence="3">
    <location>
        <position position="2"/>
    </location>
</feature>
<feature type="modified residue" description="Phosphoserine" evidence="3">
    <location>
        <position position="4"/>
    </location>
</feature>
<feature type="modified residue" description="Phosphotyrosine" evidence="3">
    <location>
        <position position="8"/>
    </location>
</feature>
<feature type="modified residue" description="Phosphoserine" evidence="3">
    <location>
        <position position="67"/>
    </location>
</feature>
<feature type="modified residue" description="Phosphoserine" evidence="3">
    <location>
        <position position="74"/>
    </location>
</feature>
<feature type="modified residue" description="Phosphoserine" evidence="3">
    <location>
        <position position="136"/>
    </location>
</feature>
<feature type="modified residue" description="Phosphoserine" evidence="3">
    <location>
        <position position="493"/>
    </location>
</feature>
<feature type="modified residue" description="Phosphothreonine" evidence="3">
    <location>
        <position position="544"/>
    </location>
</feature>
<feature type="modified residue" description="Phosphoserine" evidence="3">
    <location>
        <position position="570"/>
    </location>
</feature>
<feature type="modified residue" description="Phosphothreonine" evidence="3">
    <location>
        <position position="671"/>
    </location>
</feature>
<feature type="modified residue" description="Phosphoserine" evidence="3">
    <location>
        <position position="679"/>
    </location>
</feature>
<feature type="modified residue" description="Omega-N-methylarginine" evidence="3">
    <location>
        <position position="833"/>
    </location>
</feature>
<feature type="modified residue" description="Omega-N-methylarginine" evidence="3">
    <location>
        <position position="840"/>
    </location>
</feature>
<feature type="modified residue" description="Omega-N-methylarginine" evidence="3">
    <location>
        <position position="850"/>
    </location>
</feature>
<feature type="cross-link" description="Glycyl lysine isopeptide (Lys-Gly) (interchain with G-Cter in SUMO2)" evidence="3">
    <location>
        <position position="150"/>
    </location>
</feature>
<name>SRRT_BOVIN</name>
<protein>
    <recommendedName>
        <fullName>Serrate RNA effector molecule homolog</fullName>
    </recommendedName>
    <alternativeName>
        <fullName>Arsenite-resistance protein 2</fullName>
    </alternativeName>
</protein>
<gene>
    <name type="primary">SRRT</name>
    <name type="synonym">ARS2</name>
</gene>
<accession>A4IFB1</accession>
<reference key="1">
    <citation type="submission" date="2007-03" db="EMBL/GenBank/DDBJ databases">
        <authorList>
            <consortium name="NIH - Mammalian Gene Collection (MGC) project"/>
        </authorList>
    </citation>
    <scope>NUCLEOTIDE SEQUENCE [LARGE SCALE MRNA]</scope>
    <source>
        <strain>Hereford</strain>
        <tissue>Ascending colon</tissue>
    </source>
</reference>
<sequence length="876" mass="100566">MGDSDDEYDRRRRDKFRRERSDYDRSRERDERRRGDDWNDREWDRGRERRSRGEYRDYDRNRRERFSPPRHELSPPQKRMRRDWDEHSSDPYHSGYEMPYAGGGGGPAYGPPQPWGHPDVHIVQHPVLPIQARLGSIAEIDLGVPPPVMKTFKEFLLSLDDAVDETEAVKRYNDYKLDFRRQQMQDFFLAHKDEEWFRSKYHPDEVGKRRQEARGALQNRLRVFLSLMESGWFDNLLLDIDKADAIVKMLDAAVIKMEGGTENDLRILEQEEEEEQAGKPGEPNKKEESRVGPGLGDGERKANEKDDKKEDGKQAENESSSDDKIKKSEGDGDKEEKKEDSEKEAKKSSKKRNRKHSGDDSFDEGSVSESESESESGQAEEEKEEADETLKEKEKPKEEEREKPKDAPGLECKPRPLHKTCSLFMRNIAPNISRAEIISLCKRYPGFMRVALSEPQPERRFFRRGWVTFDRSVNIKEICWNLQNIRLRECELSPGVNRDLTRRVRNINGITQHKQIVRNDIKLAAKLVHTLDDRTQLWAPEPGTPALPASLPSQNPILKNITDYLIEEVSAEEEELLGSSGGAPPEEPPKEGNPAEINVERDEKLIKVLDKLLLYLRIVHSLDYYNTCEYPNEDEMPNRCGIIHVRGPMPPNRISHGEVLEWQKTFEEKLTPLLSVRESLSEEEAQKMGRKDPEQEVEKFVTSNTQELGKDKWLCPLSGKKFKGPEFVRKHIFNKHAEKIEEVKKEVAFFNNFLTDAKRPALPEIKPAQPPGPAQILPPGLTPGLPYPHQTPQGLMPYGQPRPPILGYGAGAVRPAVPTGGPPYPHAPYGAGRGNYDAFRGQGGYPGKPRNRMVRGDPRAIVEYRDLDAPDDVDFF</sequence>